<keyword id="KW-0687">Ribonucleoprotein</keyword>
<keyword id="KW-0689">Ribosomal protein</keyword>
<reference key="1">
    <citation type="submission" date="2005-08" db="EMBL/GenBank/DDBJ databases">
        <title>Complete sequence of Chlorobium chlorochromatii CaD3.</title>
        <authorList>
            <consortium name="US DOE Joint Genome Institute"/>
            <person name="Copeland A."/>
            <person name="Lucas S."/>
            <person name="Lapidus A."/>
            <person name="Barry K."/>
            <person name="Detter J.C."/>
            <person name="Glavina T."/>
            <person name="Hammon N."/>
            <person name="Israni S."/>
            <person name="Pitluck S."/>
            <person name="Bryant D."/>
            <person name="Schmutz J."/>
            <person name="Larimer F."/>
            <person name="Land M."/>
            <person name="Kyrpides N."/>
            <person name="Ivanova N."/>
            <person name="Richardson P."/>
        </authorList>
    </citation>
    <scope>NUCLEOTIDE SEQUENCE [LARGE SCALE GENOMIC DNA]</scope>
    <source>
        <strain>CaD3</strain>
    </source>
</reference>
<dbReference type="EMBL" id="CP000108">
    <property type="protein sequence ID" value="ABB28994.1"/>
    <property type="molecule type" value="Genomic_DNA"/>
</dbReference>
<dbReference type="SMR" id="Q3APT1"/>
<dbReference type="STRING" id="340177.Cag_1743"/>
<dbReference type="KEGG" id="cch:Cag_1743"/>
<dbReference type="eggNOG" id="COG0227">
    <property type="taxonomic scope" value="Bacteria"/>
</dbReference>
<dbReference type="HOGENOM" id="CLU_064548_3_1_10"/>
<dbReference type="OrthoDB" id="9805609at2"/>
<dbReference type="GO" id="GO:1990904">
    <property type="term" value="C:ribonucleoprotein complex"/>
    <property type="evidence" value="ECO:0007669"/>
    <property type="project" value="UniProtKB-KW"/>
</dbReference>
<dbReference type="GO" id="GO:0005840">
    <property type="term" value="C:ribosome"/>
    <property type="evidence" value="ECO:0007669"/>
    <property type="project" value="UniProtKB-KW"/>
</dbReference>
<dbReference type="GO" id="GO:0003735">
    <property type="term" value="F:structural constituent of ribosome"/>
    <property type="evidence" value="ECO:0007669"/>
    <property type="project" value="InterPro"/>
</dbReference>
<dbReference type="GO" id="GO:0006412">
    <property type="term" value="P:translation"/>
    <property type="evidence" value="ECO:0007669"/>
    <property type="project" value="UniProtKB-UniRule"/>
</dbReference>
<dbReference type="FunFam" id="2.30.170.40:FF:000001">
    <property type="entry name" value="50S ribosomal protein L28"/>
    <property type="match status" value="1"/>
</dbReference>
<dbReference type="Gene3D" id="2.30.170.40">
    <property type="entry name" value="Ribosomal protein L28/L24"/>
    <property type="match status" value="1"/>
</dbReference>
<dbReference type="HAMAP" id="MF_00373">
    <property type="entry name" value="Ribosomal_bL28"/>
    <property type="match status" value="1"/>
</dbReference>
<dbReference type="InterPro" id="IPR050096">
    <property type="entry name" value="Bacterial_rp_bL28"/>
</dbReference>
<dbReference type="InterPro" id="IPR026569">
    <property type="entry name" value="Ribosomal_bL28"/>
</dbReference>
<dbReference type="InterPro" id="IPR034704">
    <property type="entry name" value="Ribosomal_bL28/bL31-like_sf"/>
</dbReference>
<dbReference type="InterPro" id="IPR001383">
    <property type="entry name" value="Ribosomal_bL28_bact-type"/>
</dbReference>
<dbReference type="InterPro" id="IPR037147">
    <property type="entry name" value="Ribosomal_bL28_sf"/>
</dbReference>
<dbReference type="NCBIfam" id="TIGR00009">
    <property type="entry name" value="L28"/>
    <property type="match status" value="1"/>
</dbReference>
<dbReference type="PANTHER" id="PTHR39080">
    <property type="entry name" value="50S RIBOSOMAL PROTEIN L28"/>
    <property type="match status" value="1"/>
</dbReference>
<dbReference type="PANTHER" id="PTHR39080:SF1">
    <property type="entry name" value="LARGE RIBOSOMAL SUBUNIT PROTEIN BL28A"/>
    <property type="match status" value="1"/>
</dbReference>
<dbReference type="Pfam" id="PF00830">
    <property type="entry name" value="Ribosomal_L28"/>
    <property type="match status" value="1"/>
</dbReference>
<dbReference type="SUPFAM" id="SSF143800">
    <property type="entry name" value="L28p-like"/>
    <property type="match status" value="1"/>
</dbReference>
<feature type="chain" id="PRO_1000007205" description="Large ribosomal subunit protein bL28">
    <location>
        <begin position="1"/>
        <end position="72"/>
    </location>
</feature>
<gene>
    <name evidence="1" type="primary">rpmB</name>
    <name type="ordered locus">Cag_1743</name>
</gene>
<protein>
    <recommendedName>
        <fullName evidence="1">Large ribosomal subunit protein bL28</fullName>
    </recommendedName>
    <alternativeName>
        <fullName evidence="2">50S ribosomal protein L28</fullName>
    </alternativeName>
</protein>
<proteinExistence type="inferred from homology"/>
<name>RL28_CHLCH</name>
<organism>
    <name type="scientific">Chlorobium chlorochromatii (strain CaD3)</name>
    <dbReference type="NCBI Taxonomy" id="340177"/>
    <lineage>
        <taxon>Bacteria</taxon>
        <taxon>Pseudomonadati</taxon>
        <taxon>Chlorobiota</taxon>
        <taxon>Chlorobiia</taxon>
        <taxon>Chlorobiales</taxon>
        <taxon>Chlorobiaceae</taxon>
        <taxon>Chlorobium/Pelodictyon group</taxon>
        <taxon>Chlorobium</taxon>
    </lineage>
</organism>
<sequence>MSKVCLLTGKKPKYGNSVSHANNHTRTRFEPNLHTKKIWIEEEKQFVKVKLSAKAMKIIAKTGTAELAKLLK</sequence>
<comment type="similarity">
    <text evidence="1">Belongs to the bacterial ribosomal protein bL28 family.</text>
</comment>
<accession>Q3APT1</accession>
<evidence type="ECO:0000255" key="1">
    <source>
        <dbReference type="HAMAP-Rule" id="MF_00373"/>
    </source>
</evidence>
<evidence type="ECO:0000305" key="2"/>